<reference key="1">
    <citation type="journal article" date="1995" name="J. Biol. Chem.">
        <title>Primary structure and functional expression of a cDNA encoding the bile canalicular, purine-specific Na(+)-nucleoside cotransporter.</title>
        <authorList>
            <person name="Che M."/>
            <person name="Ortiz D.F."/>
            <person name="Arias I.M."/>
        </authorList>
    </citation>
    <scope>NUCLEOTIDE SEQUENCE [MRNA]</scope>
    <scope>FUNCTION</scope>
    <scope>ACTIVITY REGULATION</scope>
    <scope>TISSUE SPECIFICITY</scope>
    <source>
        <strain>Wistar</strain>
        <tissue>Liver</tissue>
    </source>
</reference>
<reference key="2">
    <citation type="journal article" date="1996" name="Mol. Pharmacol.">
        <title>Transport of adenosine by recombinant purine- and pyrimidine-selective sodium/nucleoside cotransporters from rat jejunum expressed in Xenopus laevis oocytes.</title>
        <authorList>
            <person name="Yao S.Y."/>
            <person name="Ng A.M."/>
            <person name="Ritzel M.W."/>
            <person name="Gati W.P."/>
            <person name="Cass C.E."/>
            <person name="Young J.D."/>
        </authorList>
    </citation>
    <scope>NUCLEOTIDE SEQUENCE [MRNA]</scope>
    <scope>FUNCTION</scope>
    <source>
        <strain>Sprague-Dawley</strain>
        <tissue>Jejunum</tissue>
    </source>
</reference>
<reference key="3">
    <citation type="journal article" date="1992" name="J. Biol. Chem.">
        <title>A nucleoside transporter is functionally linked to ectonucleotidases in rat liver canalicular membrane.</title>
        <authorList>
            <person name="Che M."/>
            <person name="Nishida T."/>
            <person name="Gatmaitan Z."/>
            <person name="Arias I.M."/>
        </authorList>
    </citation>
    <scope>FUNCTION</scope>
    <source>
        <tissue>Liver</tissue>
    </source>
</reference>
<reference key="4">
    <citation type="journal article" date="2012" name="Nat. Commun.">
        <title>Quantitative maps of protein phosphorylation sites across 14 different rat organs and tissues.</title>
        <authorList>
            <person name="Lundby A."/>
            <person name="Secher A."/>
            <person name="Lage K."/>
            <person name="Nordsborg N.B."/>
            <person name="Dmytriyev A."/>
            <person name="Lundby C."/>
            <person name="Olsen J.V."/>
        </authorList>
    </citation>
    <scope>PHOSPHORYLATION [LARGE SCALE ANALYSIS] AT SER-46</scope>
    <scope>IDENTIFICATION BY MASS SPECTROMETRY [LARGE SCALE ANALYSIS]</scope>
</reference>
<protein>
    <recommendedName>
        <fullName>Sodium/nucleoside cotransporter 2</fullName>
    </recommendedName>
    <alternativeName>
        <fullName evidence="8">Concentrative nucleoside transporter 2</fullName>
        <shortName evidence="8">CNT 2</shortName>
        <shortName evidence="8">rCNT2</shortName>
    </alternativeName>
    <alternativeName>
        <fullName>Na(+)/nucleoside cotransporter 2</fullName>
    </alternativeName>
    <alternativeName>
        <fullName>Sodium-coupled nucleoside transporter 2</fullName>
    </alternativeName>
    <alternativeName>
        <fullName evidence="7">Sodium/purine nucleoside cotransporter</fullName>
        <shortName evidence="7">SPNT</shortName>
    </alternativeName>
    <alternativeName>
        <fullName>Solute carrier family 28 member 2</fullName>
    </alternativeName>
</protein>
<proteinExistence type="evidence at protein level"/>
<dbReference type="EMBL" id="U25055">
    <property type="protein sequence ID" value="AAA80640.1"/>
    <property type="molecule type" value="mRNA"/>
</dbReference>
<dbReference type="EMBL" id="U66723">
    <property type="protein sequence ID" value="AAD00159.1"/>
    <property type="molecule type" value="mRNA"/>
</dbReference>
<dbReference type="PIR" id="A57532">
    <property type="entry name" value="A57532"/>
</dbReference>
<dbReference type="RefSeq" id="NP_113852.1">
    <property type="nucleotide sequence ID" value="NM_031664.1"/>
</dbReference>
<dbReference type="SMR" id="Q62773"/>
<dbReference type="FunCoup" id="Q62773">
    <property type="interactions" value="2"/>
</dbReference>
<dbReference type="STRING" id="10116.ENSRNOP00000024658"/>
<dbReference type="BindingDB" id="Q62773"/>
<dbReference type="ChEMBL" id="CHEMBL1287616"/>
<dbReference type="TCDB" id="2.A.41.2.1">
    <property type="family name" value="the concentrative nucleoside transporter (cnt) family"/>
</dbReference>
<dbReference type="GlyGen" id="Q62773">
    <property type="glycosylation" value="2 sites"/>
</dbReference>
<dbReference type="iPTMnet" id="Q62773"/>
<dbReference type="PhosphoSitePlus" id="Q62773"/>
<dbReference type="SwissPalm" id="Q62773"/>
<dbReference type="PaxDb" id="10116-ENSRNOP00000034564"/>
<dbReference type="PeptideAtlas" id="Q62773"/>
<dbReference type="GeneID" id="60423"/>
<dbReference type="KEGG" id="rno:60423"/>
<dbReference type="UCSC" id="RGD:61840">
    <property type="organism name" value="rat"/>
</dbReference>
<dbReference type="AGR" id="RGD:61840"/>
<dbReference type="CTD" id="9153"/>
<dbReference type="RGD" id="61840">
    <property type="gene designation" value="Slc28a2"/>
</dbReference>
<dbReference type="eggNOG" id="KOG3747">
    <property type="taxonomic scope" value="Eukaryota"/>
</dbReference>
<dbReference type="InParanoid" id="Q62773"/>
<dbReference type="PhylomeDB" id="Q62773"/>
<dbReference type="Reactome" id="R-RNO-83936">
    <property type="pathway name" value="Transport of nucleosides and free purine and pyrimidine bases across the plasma membrane"/>
</dbReference>
<dbReference type="Reactome" id="R-RNO-9748787">
    <property type="pathway name" value="Azathioprine ADME"/>
</dbReference>
<dbReference type="Reactome" id="R-RNO-9755088">
    <property type="pathway name" value="Ribavirin ADME"/>
</dbReference>
<dbReference type="PRO" id="PR:Q62773"/>
<dbReference type="Proteomes" id="UP000002494">
    <property type="component" value="Unplaced"/>
</dbReference>
<dbReference type="GO" id="GO:0016327">
    <property type="term" value="C:apicolateral plasma membrane"/>
    <property type="evidence" value="ECO:0000250"/>
    <property type="project" value="UniProtKB"/>
</dbReference>
<dbReference type="GO" id="GO:0031526">
    <property type="term" value="C:brush border membrane"/>
    <property type="evidence" value="ECO:0000266"/>
    <property type="project" value="RGD"/>
</dbReference>
<dbReference type="GO" id="GO:0030135">
    <property type="term" value="C:coated vesicle"/>
    <property type="evidence" value="ECO:0000314"/>
    <property type="project" value="ARUK-UCL"/>
</dbReference>
<dbReference type="GO" id="GO:0005886">
    <property type="term" value="C:plasma membrane"/>
    <property type="evidence" value="ECO:0000314"/>
    <property type="project" value="ARUK-UCL"/>
</dbReference>
<dbReference type="GO" id="GO:0012506">
    <property type="term" value="C:vesicle membrane"/>
    <property type="evidence" value="ECO:0000314"/>
    <property type="project" value="ARUK-UCL"/>
</dbReference>
<dbReference type="GO" id="GO:0005326">
    <property type="term" value="F:neurotransmitter transmembrane transporter activity"/>
    <property type="evidence" value="ECO:0000266"/>
    <property type="project" value="RGD"/>
</dbReference>
<dbReference type="GO" id="GO:0005337">
    <property type="term" value="F:nucleoside transmembrane transporter activity"/>
    <property type="evidence" value="ECO:0000314"/>
    <property type="project" value="RGD"/>
</dbReference>
<dbReference type="GO" id="GO:0005415">
    <property type="term" value="F:nucleoside:sodium symporter activity"/>
    <property type="evidence" value="ECO:0000314"/>
    <property type="project" value="RGD"/>
</dbReference>
<dbReference type="GO" id="GO:0005345">
    <property type="term" value="F:purine nucleobase transmembrane transporter activity"/>
    <property type="evidence" value="ECO:0000266"/>
    <property type="project" value="RGD"/>
</dbReference>
<dbReference type="GO" id="GO:0015211">
    <property type="term" value="F:purine nucleoside transmembrane transporter activity"/>
    <property type="evidence" value="ECO:0000266"/>
    <property type="project" value="RGD"/>
</dbReference>
<dbReference type="GO" id="GO:0015389">
    <property type="term" value="F:pyrimidine- and adenosine-specific:sodium symporter activity"/>
    <property type="evidence" value="ECO:0000266"/>
    <property type="project" value="RGD"/>
</dbReference>
<dbReference type="GO" id="GO:0015213">
    <property type="term" value="F:uridine transmembrane transporter activity"/>
    <property type="evidence" value="ECO:0000266"/>
    <property type="project" value="RGD"/>
</dbReference>
<dbReference type="GO" id="GO:0032238">
    <property type="term" value="P:adenosine transport"/>
    <property type="evidence" value="ECO:0000266"/>
    <property type="project" value="RGD"/>
</dbReference>
<dbReference type="GO" id="GO:0035340">
    <property type="term" value="P:inosine transport"/>
    <property type="evidence" value="ECO:0000266"/>
    <property type="project" value="RGD"/>
</dbReference>
<dbReference type="GO" id="GO:0006836">
    <property type="term" value="P:neurotransmitter transport"/>
    <property type="evidence" value="ECO:0000266"/>
    <property type="project" value="RGD"/>
</dbReference>
<dbReference type="GO" id="GO:1901642">
    <property type="term" value="P:nucleoside transmembrane transport"/>
    <property type="evidence" value="ECO:0000266"/>
    <property type="project" value="RGD"/>
</dbReference>
<dbReference type="GO" id="GO:0034394">
    <property type="term" value="P:protein localization to cell surface"/>
    <property type="evidence" value="ECO:0000314"/>
    <property type="project" value="RGD"/>
</dbReference>
<dbReference type="GO" id="GO:1904823">
    <property type="term" value="P:purine nucleobase transmembrane transport"/>
    <property type="evidence" value="ECO:0000266"/>
    <property type="project" value="RGD"/>
</dbReference>
<dbReference type="GO" id="GO:0015860">
    <property type="term" value="P:purine nucleoside transmembrane transport"/>
    <property type="evidence" value="ECO:0000266"/>
    <property type="project" value="RGD"/>
</dbReference>
<dbReference type="GO" id="GO:0072531">
    <property type="term" value="P:pyrimidine-containing compound transmembrane transport"/>
    <property type="evidence" value="ECO:0000266"/>
    <property type="project" value="RGD"/>
</dbReference>
<dbReference type="GO" id="GO:0001895">
    <property type="term" value="P:retina homeostasis"/>
    <property type="evidence" value="ECO:0000314"/>
    <property type="project" value="RGD"/>
</dbReference>
<dbReference type="GO" id="GO:0015862">
    <property type="term" value="P:uridine transmembrane transport"/>
    <property type="evidence" value="ECO:0000266"/>
    <property type="project" value="RGD"/>
</dbReference>
<dbReference type="InterPro" id="IPR008276">
    <property type="entry name" value="C_nuclsd_transpt"/>
</dbReference>
<dbReference type="InterPro" id="IPR018270">
    <property type="entry name" value="C_nuclsd_transpt_met_bac"/>
</dbReference>
<dbReference type="InterPro" id="IPR011657">
    <property type="entry name" value="CNT_C_dom"/>
</dbReference>
<dbReference type="InterPro" id="IPR002668">
    <property type="entry name" value="CNT_N_dom"/>
</dbReference>
<dbReference type="InterPro" id="IPR011642">
    <property type="entry name" value="Gate_dom"/>
</dbReference>
<dbReference type="NCBIfam" id="TIGR00804">
    <property type="entry name" value="nupC"/>
    <property type="match status" value="1"/>
</dbReference>
<dbReference type="PANTHER" id="PTHR10590">
    <property type="entry name" value="SODIUM/NUCLEOSIDE COTRANSPORTER"/>
    <property type="match status" value="1"/>
</dbReference>
<dbReference type="PANTHER" id="PTHR10590:SF11">
    <property type="entry name" value="SODIUM_NUCLEOSIDE COTRANSPORTER 2"/>
    <property type="match status" value="1"/>
</dbReference>
<dbReference type="Pfam" id="PF07670">
    <property type="entry name" value="Gate"/>
    <property type="match status" value="1"/>
</dbReference>
<dbReference type="Pfam" id="PF07662">
    <property type="entry name" value="Nucleos_tra2_C"/>
    <property type="match status" value="1"/>
</dbReference>
<dbReference type="Pfam" id="PF01773">
    <property type="entry name" value="Nucleos_tra2_N"/>
    <property type="match status" value="1"/>
</dbReference>
<accession>Q62773</accession>
<accession>Q9QWI3</accession>
<sequence>MAKSEGRKSASQDTSENGMENPGLELMEVGNLEQGKTLEEVTQGHSLKDGLGHSSLWRRILQPFTKARSFYQRHAGLFKKILLGLLCLAYAAYLLAACILNFRRALALFVITCLVIFILACHFLKKFFAKKSIRCLKPLKNTRLRLWLKRVFMGAAVVGLILWLALDTAQRPEQLISFAGICMFILILFACSKHHSAVSWRTVFWGLGLQFVFGILVIRTEPGFNAFQWLGDQIQIFLAYTVEGSSFVFGDTLVQSVFAFQSLPIIIFFGCVMSILYYLGLVQWVIQKIAWFLQITMGTTAAETLAVAGNIFVGMTEAPLLIRPYLADMTLSEIHAVMTGGFATIAGTVLGAFISFGIDASSLISASVMAAPCALALSKLVYPEVEESKFKSKEGVKLPRGEERNILEAASNGATDAIALVANVAANLIAFLAVLAFINSTLSWLGEMVDIHGLTFQVICSYVLRPMVFMMGVQWADCPLVAEIVGVKFFINEFVAYQQLSQYKNKRLSGVEEWINGEKQWISVKAEIIATFSLCGFANLTSIGITLGGLTSMVPQRKSDLCKLVVRALFTGACVSFISACMAGILYVPRGAETDCVSFLNTNFTNRTYETYVCCRELFQSTLLNGTNMPSFSGPWQDKESSLRNLAKCCDLYTSTVCA</sequence>
<keyword id="KW-1003">Cell membrane</keyword>
<keyword id="KW-0472">Membrane</keyword>
<keyword id="KW-0597">Phosphoprotein</keyword>
<keyword id="KW-1185">Reference proteome</keyword>
<keyword id="KW-0812">Transmembrane</keyword>
<keyword id="KW-1133">Transmembrane helix</keyword>
<keyword id="KW-0813">Transport</keyword>
<gene>
    <name type="primary">Slc28a2</name>
    <name type="synonym">Cnt2</name>
    <name evidence="7" type="synonym">Spnt</name>
</gene>
<evidence type="ECO:0000250" key="1">
    <source>
        <dbReference type="UniProtKB" id="O43868"/>
    </source>
</evidence>
<evidence type="ECO:0000255" key="2"/>
<evidence type="ECO:0000256" key="3">
    <source>
        <dbReference type="SAM" id="MobiDB-lite"/>
    </source>
</evidence>
<evidence type="ECO:0000269" key="4">
    <source>
    </source>
</evidence>
<evidence type="ECO:0000269" key="5">
    <source>
    </source>
</evidence>
<evidence type="ECO:0000269" key="6">
    <source>
    </source>
</evidence>
<evidence type="ECO:0000303" key="7">
    <source>
    </source>
</evidence>
<evidence type="ECO:0000303" key="8">
    <source>
    </source>
</evidence>
<evidence type="ECO:0000305" key="9"/>
<evidence type="ECO:0007744" key="10">
    <source>
    </source>
</evidence>
<comment type="function">
    <text evidence="1 4 5 6">Sodium-dependent and purine-selective (PubMed:1315767, PubMed:7775409, PubMed:8967974). Exhibits the transport characteristics of the nucleoside transport system cif or N1 subtype (N1/cif) (selective for purine nucleosides and uridine) (PubMed:1315767, PubMed:7775409, PubMed:8967974). Accepts purine, analogs of purine nucleosides and uridine, and exhibits high affinity for adenosine (PubMed:7775409). May contribute to regulate the transport of organic compounds in testes across the blood-testis-barrier (By similarity).</text>
</comment>
<comment type="catalytic activity">
    <reaction evidence="5">
        <text>adenosine(out) + Na(+)(out) = adenosine(in) + Na(+)(in)</text>
        <dbReference type="Rhea" id="RHEA:69927"/>
        <dbReference type="ChEBI" id="CHEBI:16335"/>
        <dbReference type="ChEBI" id="CHEBI:29101"/>
    </reaction>
</comment>
<comment type="catalytic activity">
    <reaction evidence="5">
        <text>inosine(out) + Na(+)(out) = inosine(in) + Na(+)(in)</text>
        <dbReference type="Rhea" id="RHEA:69931"/>
        <dbReference type="ChEBI" id="CHEBI:17596"/>
        <dbReference type="ChEBI" id="CHEBI:29101"/>
    </reaction>
</comment>
<comment type="catalytic activity">
    <reaction evidence="5">
        <text>guanosine(out) + Na(+)(out) = guanosine(in) + Na(+)(in)</text>
        <dbReference type="Rhea" id="RHEA:69935"/>
        <dbReference type="ChEBI" id="CHEBI:16750"/>
        <dbReference type="ChEBI" id="CHEBI:29101"/>
    </reaction>
</comment>
<comment type="catalytic activity">
    <reaction evidence="5">
        <text>uridine(out) + Na(+)(out) = uridine(in) + Na(+)(in)</text>
        <dbReference type="Rhea" id="RHEA:69887"/>
        <dbReference type="ChEBI" id="CHEBI:16704"/>
        <dbReference type="ChEBI" id="CHEBI:29101"/>
    </reaction>
</comment>
<comment type="activity regulation">
    <text evidence="5">Inhibited by formycin B, partially inhibited by purine analog ara-A.</text>
</comment>
<comment type="subcellular location">
    <subcellularLocation>
        <location evidence="1">Membrane</location>
        <topology evidence="2">Multi-pass membrane protein</topology>
    </subcellularLocation>
    <subcellularLocation>
        <location evidence="1">Apicolateral cell membrane</location>
        <topology evidence="2">Multi-pass membrane protein</topology>
    </subcellularLocation>
</comment>
<comment type="tissue specificity">
    <text evidence="5">Expressed in liver (in bile canalicular membrane vesicles (CMV) but not in sinusoidal vesicles), jejunum, spleen and heart (PubMed:7775409). Also expressed in brain and skeletal muscle (PubMed:7775409). Not expressed in kidney, muscle and lung (PubMed:7775409).</text>
</comment>
<comment type="similarity">
    <text evidence="9">Belongs to the concentrative nucleoside transporter (CNT) (TC 2.A.41) family.</text>
</comment>
<name>S28A2_RAT</name>
<feature type="chain" id="PRO_0000070452" description="Sodium/nucleoside cotransporter 2">
    <location>
        <begin position="1"/>
        <end position="659"/>
    </location>
</feature>
<feature type="transmembrane region" description="Helical" evidence="2">
    <location>
        <begin position="81"/>
        <end position="101"/>
    </location>
</feature>
<feature type="transmembrane region" description="Helical" evidence="2">
    <location>
        <begin position="105"/>
        <end position="124"/>
    </location>
</feature>
<feature type="transmembrane region" description="Helical" evidence="2">
    <location>
        <begin position="149"/>
        <end position="167"/>
    </location>
</feature>
<feature type="transmembrane region" description="Helical" evidence="2">
    <location>
        <begin position="173"/>
        <end position="193"/>
    </location>
</feature>
<feature type="transmembrane region" description="Helical" evidence="2">
    <location>
        <begin position="201"/>
        <end position="221"/>
    </location>
</feature>
<feature type="transmembrane region" description="Helical" evidence="2">
    <location>
        <begin position="234"/>
        <end position="254"/>
    </location>
</feature>
<feature type="transmembrane region" description="Helical" evidence="2">
    <location>
        <begin position="261"/>
        <end position="281"/>
    </location>
</feature>
<feature type="transmembrane region" description="Helical" evidence="2">
    <location>
        <begin position="296"/>
        <end position="315"/>
    </location>
</feature>
<feature type="transmembrane region" description="Helical" evidence="2">
    <location>
        <begin position="337"/>
        <end position="356"/>
    </location>
</feature>
<feature type="transmembrane region" description="Helical" evidence="2">
    <location>
        <begin position="363"/>
        <end position="382"/>
    </location>
</feature>
<feature type="transmembrane region" description="Helical" evidence="2">
    <location>
        <begin position="424"/>
        <end position="444"/>
    </location>
</feature>
<feature type="transmembrane region" description="Helical" evidence="2">
    <location>
        <begin position="455"/>
        <end position="475"/>
    </location>
</feature>
<feature type="transmembrane region" description="Helical" evidence="2">
    <location>
        <begin position="530"/>
        <end position="550"/>
    </location>
</feature>
<feature type="transmembrane region" description="Helical" evidence="2">
    <location>
        <begin position="568"/>
        <end position="588"/>
    </location>
</feature>
<feature type="region of interest" description="Disordered" evidence="3">
    <location>
        <begin position="1"/>
        <end position="22"/>
    </location>
</feature>
<feature type="compositionally biased region" description="Basic and acidic residues" evidence="3">
    <location>
        <begin position="1"/>
        <end position="10"/>
    </location>
</feature>
<feature type="modified residue" description="Phosphoserine" evidence="10">
    <location>
        <position position="46"/>
    </location>
</feature>
<feature type="sequence conflict" description="In Ref. 2; AAD00159." evidence="9" ref="2">
    <original>A</original>
    <variation>G</variation>
    <location>
        <position position="419"/>
    </location>
</feature>
<feature type="sequence conflict" description="In Ref. 2; AAD00159." evidence="9" ref="2">
    <original>I</original>
    <variation>V</variation>
    <location>
        <position position="522"/>
    </location>
</feature>
<organism>
    <name type="scientific">Rattus norvegicus</name>
    <name type="common">Rat</name>
    <dbReference type="NCBI Taxonomy" id="10116"/>
    <lineage>
        <taxon>Eukaryota</taxon>
        <taxon>Metazoa</taxon>
        <taxon>Chordata</taxon>
        <taxon>Craniata</taxon>
        <taxon>Vertebrata</taxon>
        <taxon>Euteleostomi</taxon>
        <taxon>Mammalia</taxon>
        <taxon>Eutheria</taxon>
        <taxon>Euarchontoglires</taxon>
        <taxon>Glires</taxon>
        <taxon>Rodentia</taxon>
        <taxon>Myomorpha</taxon>
        <taxon>Muroidea</taxon>
        <taxon>Muridae</taxon>
        <taxon>Murinae</taxon>
        <taxon>Rattus</taxon>
    </lineage>
</organism>